<protein>
    <recommendedName>
        <fullName evidence="1">Aspartate--tRNA(Asp/Asn) ligase</fullName>
        <ecNumber evidence="1">6.1.1.23</ecNumber>
    </recommendedName>
    <alternativeName>
        <fullName evidence="1">Aspartyl-tRNA synthetase</fullName>
        <shortName evidence="1">AspRS</shortName>
    </alternativeName>
    <alternativeName>
        <fullName evidence="1">Non-discriminating aspartyl-tRNA synthetase</fullName>
        <shortName evidence="1">ND-AspRS</shortName>
    </alternativeName>
</protein>
<dbReference type="EC" id="6.1.1.23" evidence="1"/>
<dbReference type="EMBL" id="CP000542">
    <property type="protein sequence ID" value="ABM57093.1"/>
    <property type="molecule type" value="Genomic_DNA"/>
</dbReference>
<dbReference type="RefSeq" id="WP_011809103.1">
    <property type="nucleotide sequence ID" value="NC_008786.1"/>
</dbReference>
<dbReference type="SMR" id="A1WHI6"/>
<dbReference type="STRING" id="391735.Veis_1326"/>
<dbReference type="GeneID" id="76459969"/>
<dbReference type="KEGG" id="vei:Veis_1326"/>
<dbReference type="eggNOG" id="COG0173">
    <property type="taxonomic scope" value="Bacteria"/>
</dbReference>
<dbReference type="HOGENOM" id="CLU_014330_3_2_4"/>
<dbReference type="OrthoDB" id="9802326at2"/>
<dbReference type="Proteomes" id="UP000000374">
    <property type="component" value="Chromosome"/>
</dbReference>
<dbReference type="GO" id="GO:0005737">
    <property type="term" value="C:cytoplasm"/>
    <property type="evidence" value="ECO:0007669"/>
    <property type="project" value="UniProtKB-SubCell"/>
</dbReference>
<dbReference type="GO" id="GO:0004815">
    <property type="term" value="F:aspartate-tRNA ligase activity"/>
    <property type="evidence" value="ECO:0007669"/>
    <property type="project" value="UniProtKB-UniRule"/>
</dbReference>
<dbReference type="GO" id="GO:0050560">
    <property type="term" value="F:aspartate-tRNA(Asn) ligase activity"/>
    <property type="evidence" value="ECO:0007669"/>
    <property type="project" value="UniProtKB-EC"/>
</dbReference>
<dbReference type="GO" id="GO:0005524">
    <property type="term" value="F:ATP binding"/>
    <property type="evidence" value="ECO:0007669"/>
    <property type="project" value="UniProtKB-UniRule"/>
</dbReference>
<dbReference type="GO" id="GO:0003676">
    <property type="term" value="F:nucleic acid binding"/>
    <property type="evidence" value="ECO:0007669"/>
    <property type="project" value="InterPro"/>
</dbReference>
<dbReference type="GO" id="GO:0006422">
    <property type="term" value="P:aspartyl-tRNA aminoacylation"/>
    <property type="evidence" value="ECO:0007669"/>
    <property type="project" value="UniProtKB-UniRule"/>
</dbReference>
<dbReference type="CDD" id="cd00777">
    <property type="entry name" value="AspRS_core"/>
    <property type="match status" value="1"/>
</dbReference>
<dbReference type="CDD" id="cd04317">
    <property type="entry name" value="EcAspRS_like_N"/>
    <property type="match status" value="1"/>
</dbReference>
<dbReference type="Gene3D" id="3.30.930.10">
    <property type="entry name" value="Bira Bifunctional Protein, Domain 2"/>
    <property type="match status" value="1"/>
</dbReference>
<dbReference type="Gene3D" id="3.30.1360.30">
    <property type="entry name" value="GAD-like domain"/>
    <property type="match status" value="1"/>
</dbReference>
<dbReference type="Gene3D" id="2.40.50.140">
    <property type="entry name" value="Nucleic acid-binding proteins"/>
    <property type="match status" value="1"/>
</dbReference>
<dbReference type="HAMAP" id="MF_00044">
    <property type="entry name" value="Asp_tRNA_synth_type1"/>
    <property type="match status" value="1"/>
</dbReference>
<dbReference type="InterPro" id="IPR004364">
    <property type="entry name" value="Aa-tRNA-synt_II"/>
</dbReference>
<dbReference type="InterPro" id="IPR006195">
    <property type="entry name" value="aa-tRNA-synth_II"/>
</dbReference>
<dbReference type="InterPro" id="IPR045864">
    <property type="entry name" value="aa-tRNA-synth_II/BPL/LPL"/>
</dbReference>
<dbReference type="InterPro" id="IPR004524">
    <property type="entry name" value="Asp-tRNA-ligase_1"/>
</dbReference>
<dbReference type="InterPro" id="IPR047089">
    <property type="entry name" value="Asp-tRNA-ligase_1_N"/>
</dbReference>
<dbReference type="InterPro" id="IPR002312">
    <property type="entry name" value="Asp/Asn-tRNA-synth_IIb"/>
</dbReference>
<dbReference type="InterPro" id="IPR047090">
    <property type="entry name" value="AspRS_core"/>
</dbReference>
<dbReference type="InterPro" id="IPR004115">
    <property type="entry name" value="GAD-like_sf"/>
</dbReference>
<dbReference type="InterPro" id="IPR029351">
    <property type="entry name" value="GAD_dom"/>
</dbReference>
<dbReference type="InterPro" id="IPR012340">
    <property type="entry name" value="NA-bd_OB-fold"/>
</dbReference>
<dbReference type="InterPro" id="IPR004365">
    <property type="entry name" value="NA-bd_OB_tRNA"/>
</dbReference>
<dbReference type="NCBIfam" id="TIGR00459">
    <property type="entry name" value="aspS_bact"/>
    <property type="match status" value="1"/>
</dbReference>
<dbReference type="NCBIfam" id="NF001750">
    <property type="entry name" value="PRK00476.1"/>
    <property type="match status" value="1"/>
</dbReference>
<dbReference type="PANTHER" id="PTHR22594:SF5">
    <property type="entry name" value="ASPARTATE--TRNA LIGASE, MITOCHONDRIAL"/>
    <property type="match status" value="1"/>
</dbReference>
<dbReference type="PANTHER" id="PTHR22594">
    <property type="entry name" value="ASPARTYL/LYSYL-TRNA SYNTHETASE"/>
    <property type="match status" value="1"/>
</dbReference>
<dbReference type="Pfam" id="PF02938">
    <property type="entry name" value="GAD"/>
    <property type="match status" value="1"/>
</dbReference>
<dbReference type="Pfam" id="PF00152">
    <property type="entry name" value="tRNA-synt_2"/>
    <property type="match status" value="1"/>
</dbReference>
<dbReference type="Pfam" id="PF01336">
    <property type="entry name" value="tRNA_anti-codon"/>
    <property type="match status" value="1"/>
</dbReference>
<dbReference type="PRINTS" id="PR01042">
    <property type="entry name" value="TRNASYNTHASP"/>
</dbReference>
<dbReference type="SUPFAM" id="SSF55681">
    <property type="entry name" value="Class II aaRS and biotin synthetases"/>
    <property type="match status" value="1"/>
</dbReference>
<dbReference type="SUPFAM" id="SSF55261">
    <property type="entry name" value="GAD domain-like"/>
    <property type="match status" value="1"/>
</dbReference>
<dbReference type="SUPFAM" id="SSF50249">
    <property type="entry name" value="Nucleic acid-binding proteins"/>
    <property type="match status" value="1"/>
</dbReference>
<dbReference type="PROSITE" id="PS50862">
    <property type="entry name" value="AA_TRNA_LIGASE_II"/>
    <property type="match status" value="1"/>
</dbReference>
<evidence type="ECO:0000255" key="1">
    <source>
        <dbReference type="HAMAP-Rule" id="MF_00044"/>
    </source>
</evidence>
<feature type="chain" id="PRO_1000006779" description="Aspartate--tRNA(Asp/Asn) ligase">
    <location>
        <begin position="1"/>
        <end position="604"/>
    </location>
</feature>
<feature type="region of interest" description="Aspartate" evidence="1">
    <location>
        <begin position="198"/>
        <end position="201"/>
    </location>
</feature>
<feature type="binding site" evidence="1">
    <location>
        <position position="174"/>
    </location>
    <ligand>
        <name>L-aspartate</name>
        <dbReference type="ChEBI" id="CHEBI:29991"/>
    </ligand>
</feature>
<feature type="binding site" evidence="1">
    <location>
        <begin position="220"/>
        <end position="222"/>
    </location>
    <ligand>
        <name>ATP</name>
        <dbReference type="ChEBI" id="CHEBI:30616"/>
    </ligand>
</feature>
<feature type="binding site" evidence="1">
    <location>
        <position position="220"/>
    </location>
    <ligand>
        <name>L-aspartate</name>
        <dbReference type="ChEBI" id="CHEBI:29991"/>
    </ligand>
</feature>
<feature type="binding site" evidence="1">
    <location>
        <position position="229"/>
    </location>
    <ligand>
        <name>ATP</name>
        <dbReference type="ChEBI" id="CHEBI:30616"/>
    </ligand>
</feature>
<feature type="binding site" evidence="1">
    <location>
        <position position="460"/>
    </location>
    <ligand>
        <name>L-aspartate</name>
        <dbReference type="ChEBI" id="CHEBI:29991"/>
    </ligand>
</feature>
<feature type="binding site" evidence="1">
    <location>
        <position position="494"/>
    </location>
    <ligand>
        <name>ATP</name>
        <dbReference type="ChEBI" id="CHEBI:30616"/>
    </ligand>
</feature>
<feature type="binding site" evidence="1">
    <location>
        <position position="501"/>
    </location>
    <ligand>
        <name>L-aspartate</name>
        <dbReference type="ChEBI" id="CHEBI:29991"/>
    </ligand>
</feature>
<feature type="binding site" evidence="1">
    <location>
        <begin position="546"/>
        <end position="549"/>
    </location>
    <ligand>
        <name>ATP</name>
        <dbReference type="ChEBI" id="CHEBI:30616"/>
    </ligand>
</feature>
<feature type="site" description="Important for tRNA non-discrimination" evidence="1">
    <location>
        <position position="32"/>
    </location>
</feature>
<feature type="site" description="Important for tRNA non-discrimination" evidence="1">
    <location>
        <position position="83"/>
    </location>
</feature>
<proteinExistence type="inferred from homology"/>
<organism>
    <name type="scientific">Verminephrobacter eiseniae (strain EF01-2)</name>
    <dbReference type="NCBI Taxonomy" id="391735"/>
    <lineage>
        <taxon>Bacteria</taxon>
        <taxon>Pseudomonadati</taxon>
        <taxon>Pseudomonadota</taxon>
        <taxon>Betaproteobacteria</taxon>
        <taxon>Burkholderiales</taxon>
        <taxon>Comamonadaceae</taxon>
        <taxon>Verminephrobacter</taxon>
    </lineage>
</organism>
<keyword id="KW-0030">Aminoacyl-tRNA synthetase</keyword>
<keyword id="KW-0067">ATP-binding</keyword>
<keyword id="KW-0963">Cytoplasm</keyword>
<keyword id="KW-0436">Ligase</keyword>
<keyword id="KW-0547">Nucleotide-binding</keyword>
<keyword id="KW-0648">Protein biosynthesis</keyword>
<keyword id="KW-1185">Reference proteome</keyword>
<sequence>MAMRTHYCGLVTQALMGQTVTLAGWVNRRRDHGGVIFIDLRDREGHVQVVCDPEREQMFKTAEGLRSEFCVQVTGLVRARPDGSSNDRIKSGQIEVLCHALNVLNPSVTPAFQIDEENLSETTRLTHRVLDLRRPYMQRNLMLRYKVAMQVRNFLDANGFIDIETPMLTKSTPEGARDYLVPSRVHDGQFFALPQSPQLFKQLLMVAGFDRYYQITKCFRDEDLRADRQPEFTQIDIETSFMQEQDIRDLFQDMIETVFRNTLGVDLGEFPVMTYQDATSRYGSDKPDLRVKLEFTELTGVMKDVDFKVFSGAAGMKGGRVVGLRVPGGARDAGGLSRGEIDAYTEFVKIYGAKGLAYIKVNARARGRDGLQSPIVKNLHDAALTEILARTGAQDGDLIFFGADKEKIVNDAIGALRTKIGHSEFGKKNGLFEERWAALWVVDFPMFEFDEQAQRYSAMHHPFTAPKDGHEDWMASAPEKCISKGYDMVLNGWEMGGGSVRIHRADVQQKVFDALQITPEEARLKFGFLLDALQYGAPPHGGMAFGLDRIVTLMTGAESIRDVIAFPKTQRAQCLLTQAPSPVDEKQLRELHIRLRNPDAAKAH</sequence>
<reference key="1">
    <citation type="submission" date="2006-12" db="EMBL/GenBank/DDBJ databases">
        <title>Complete sequence of chromosome 1 of Verminephrobacter eiseniae EF01-2.</title>
        <authorList>
            <person name="Copeland A."/>
            <person name="Lucas S."/>
            <person name="Lapidus A."/>
            <person name="Barry K."/>
            <person name="Detter J.C."/>
            <person name="Glavina del Rio T."/>
            <person name="Dalin E."/>
            <person name="Tice H."/>
            <person name="Pitluck S."/>
            <person name="Chertkov O."/>
            <person name="Brettin T."/>
            <person name="Bruce D."/>
            <person name="Han C."/>
            <person name="Tapia R."/>
            <person name="Gilna P."/>
            <person name="Schmutz J."/>
            <person name="Larimer F."/>
            <person name="Land M."/>
            <person name="Hauser L."/>
            <person name="Kyrpides N."/>
            <person name="Kim E."/>
            <person name="Stahl D."/>
            <person name="Richardson P."/>
        </authorList>
    </citation>
    <scope>NUCLEOTIDE SEQUENCE [LARGE SCALE GENOMIC DNA]</scope>
    <source>
        <strain>EF01-2</strain>
    </source>
</reference>
<comment type="function">
    <text evidence="1">Aspartyl-tRNA synthetase with relaxed tRNA specificity since it is able to aspartylate not only its cognate tRNA(Asp) but also tRNA(Asn). Reaction proceeds in two steps: L-aspartate is first activated by ATP to form Asp-AMP and then transferred to the acceptor end of tRNA(Asp/Asn).</text>
</comment>
<comment type="catalytic activity">
    <reaction evidence="1">
        <text>tRNA(Asx) + L-aspartate + ATP = L-aspartyl-tRNA(Asx) + AMP + diphosphate</text>
        <dbReference type="Rhea" id="RHEA:18349"/>
        <dbReference type="Rhea" id="RHEA-COMP:9710"/>
        <dbReference type="Rhea" id="RHEA-COMP:9711"/>
        <dbReference type="ChEBI" id="CHEBI:29991"/>
        <dbReference type="ChEBI" id="CHEBI:30616"/>
        <dbReference type="ChEBI" id="CHEBI:33019"/>
        <dbReference type="ChEBI" id="CHEBI:78442"/>
        <dbReference type="ChEBI" id="CHEBI:78516"/>
        <dbReference type="ChEBI" id="CHEBI:456215"/>
        <dbReference type="EC" id="6.1.1.23"/>
    </reaction>
</comment>
<comment type="subunit">
    <text evidence="1">Homodimer.</text>
</comment>
<comment type="subcellular location">
    <subcellularLocation>
        <location evidence="1">Cytoplasm</location>
    </subcellularLocation>
</comment>
<comment type="similarity">
    <text evidence="1">Belongs to the class-II aminoacyl-tRNA synthetase family. Type 1 subfamily.</text>
</comment>
<gene>
    <name evidence="1" type="primary">aspS</name>
    <name type="ordered locus">Veis_1326</name>
</gene>
<accession>A1WHI6</accession>
<name>SYDND_VEREI</name>